<dbReference type="EC" id="1.1.1.421" evidence="2"/>
<dbReference type="EMBL" id="BX950851">
    <property type="protein sequence ID" value="CAG73781.1"/>
    <property type="molecule type" value="Genomic_DNA"/>
</dbReference>
<dbReference type="RefSeq" id="WP_011092472.1">
    <property type="nucleotide sequence ID" value="NC_004547.2"/>
</dbReference>
<dbReference type="SMR" id="Q6D8V3"/>
<dbReference type="STRING" id="218491.ECA0869"/>
<dbReference type="DNASU" id="2881392"/>
<dbReference type="KEGG" id="eca:ECA0869"/>
<dbReference type="PATRIC" id="fig|218491.5.peg.869"/>
<dbReference type="eggNOG" id="COG2084">
    <property type="taxonomic scope" value="Bacteria"/>
</dbReference>
<dbReference type="HOGENOM" id="CLU_087850_0_0_6"/>
<dbReference type="OrthoDB" id="1677316at2"/>
<dbReference type="BioCyc" id="MetaCyc:MONOMER-20972"/>
<dbReference type="BRENDA" id="1.1.1.421">
    <property type="organism ID" value="9330"/>
</dbReference>
<dbReference type="SABIO-RK" id="Q6D8V3"/>
<dbReference type="Proteomes" id="UP000007966">
    <property type="component" value="Chromosome"/>
</dbReference>
<dbReference type="GO" id="GO:0046872">
    <property type="term" value="F:metal ion binding"/>
    <property type="evidence" value="ECO:0007669"/>
    <property type="project" value="UniProtKB-KW"/>
</dbReference>
<dbReference type="GO" id="GO:0070403">
    <property type="term" value="F:NAD+ binding"/>
    <property type="evidence" value="ECO:0007669"/>
    <property type="project" value="TreeGrafter"/>
</dbReference>
<dbReference type="GO" id="GO:0050661">
    <property type="term" value="F:NADP binding"/>
    <property type="evidence" value="ECO:0007669"/>
    <property type="project" value="InterPro"/>
</dbReference>
<dbReference type="GO" id="GO:0008977">
    <property type="term" value="F:prephenate dehydrogenase (NAD+) activity"/>
    <property type="evidence" value="ECO:0007669"/>
    <property type="project" value="TreeGrafter"/>
</dbReference>
<dbReference type="GO" id="GO:0006571">
    <property type="term" value="P:tyrosine biosynthetic process"/>
    <property type="evidence" value="ECO:0007669"/>
    <property type="project" value="TreeGrafter"/>
</dbReference>
<dbReference type="Gene3D" id="3.40.50.720">
    <property type="entry name" value="NAD(P)-binding Rossmann-like Domain"/>
    <property type="match status" value="1"/>
</dbReference>
<dbReference type="Gene3D" id="1.10.3640.10">
    <property type="entry name" value="Semialdehyde dehydrogenase-like, C-terminal"/>
    <property type="match status" value="1"/>
</dbReference>
<dbReference type="InterPro" id="IPR006115">
    <property type="entry name" value="6PGDH_NADP-bd"/>
</dbReference>
<dbReference type="InterPro" id="IPR036291">
    <property type="entry name" value="NAD(P)-bd_dom_sf"/>
</dbReference>
<dbReference type="InterPro" id="IPR031663">
    <property type="entry name" value="PGDH_C"/>
</dbReference>
<dbReference type="InterPro" id="IPR050812">
    <property type="entry name" value="Preph/Arog_dehydrog"/>
</dbReference>
<dbReference type="InterPro" id="IPR037161">
    <property type="entry name" value="Semialdehyde_DH-like_C"/>
</dbReference>
<dbReference type="PANTHER" id="PTHR21363">
    <property type="entry name" value="PREPHENATE DEHYDROGENASE"/>
    <property type="match status" value="1"/>
</dbReference>
<dbReference type="PANTHER" id="PTHR21363:SF0">
    <property type="entry name" value="PREPHENATE DEHYDROGENASE [NADP(+)]"/>
    <property type="match status" value="1"/>
</dbReference>
<dbReference type="Pfam" id="PF03446">
    <property type="entry name" value="NAD_binding_2"/>
    <property type="match status" value="1"/>
</dbReference>
<dbReference type="Pfam" id="PF16896">
    <property type="entry name" value="PGDH_C"/>
    <property type="match status" value="1"/>
</dbReference>
<dbReference type="SUPFAM" id="SSF51735">
    <property type="entry name" value="NAD(P)-binding Rossmann-fold domains"/>
    <property type="match status" value="1"/>
</dbReference>
<sequence>MAAELKTITVLGAGGKMGMRISANFQKSDYQVFYCENSPRAQEQVVAAGRELSIAEQVIPESDVVILAVPDIALKAVSGIVVPQMKSNAVLLTLDPAAAYANLIAKRDDIDYAVAHPCHPSVFLDRFTPEEHADAFGGVAAPQHVAASYETGSDEQKATLARVVKVMYGPVIDVHWVTVKQLAYLEPTLVETVACMVGTLMKEALDETINTIGVPEAAAKAMLYGHIQIALAVAFRSTNPFSDACMIAIEYGKENIIKPDWKKIFDEKELDLVIAKMLKIDAIER</sequence>
<organism>
    <name type="scientific">Pectobacterium atrosepticum (strain SCRI 1043 / ATCC BAA-672)</name>
    <name type="common">Erwinia carotovora subsp. atroseptica</name>
    <dbReference type="NCBI Taxonomy" id="218491"/>
    <lineage>
        <taxon>Bacteria</taxon>
        <taxon>Pseudomonadati</taxon>
        <taxon>Pseudomonadota</taxon>
        <taxon>Gammaproteobacteria</taxon>
        <taxon>Enterobacterales</taxon>
        <taxon>Pectobacteriaceae</taxon>
        <taxon>Pectobacterium</taxon>
    </lineage>
</organism>
<feature type="chain" id="PRO_0000446032" description="D-apionate oxidoisomerase">
    <location>
        <begin position="1"/>
        <end position="285"/>
    </location>
</feature>
<feature type="binding site" evidence="1">
    <location>
        <begin position="15"/>
        <end position="17"/>
    </location>
    <ligand>
        <name>NAD(+)</name>
        <dbReference type="ChEBI" id="CHEBI:57540"/>
    </ligand>
</feature>
<feature type="binding site" evidence="1">
    <location>
        <position position="36"/>
    </location>
    <ligand>
        <name>NAD(+)</name>
        <dbReference type="ChEBI" id="CHEBI:57540"/>
    </ligand>
</feature>
<feature type="binding site" evidence="1">
    <location>
        <position position="71"/>
    </location>
    <ligand>
        <name>NAD(+)</name>
        <dbReference type="ChEBI" id="CHEBI:57540"/>
    </ligand>
</feature>
<feature type="binding site" evidence="1">
    <location>
        <position position="116"/>
    </location>
    <ligand>
        <name>Zn(2+)</name>
        <dbReference type="ChEBI" id="CHEBI:29105"/>
    </ligand>
</feature>
<feature type="binding site" evidence="1">
    <location>
        <position position="186"/>
    </location>
    <ligand>
        <name>Zn(2+)</name>
        <dbReference type="ChEBI" id="CHEBI:29105"/>
    </ligand>
</feature>
<accession>Q6D8V3</accession>
<reference key="1">
    <citation type="journal article" date="2004" name="Proc. Natl. Acad. Sci. U.S.A.">
        <title>Genome sequence of the enterobacterial phytopathogen Erwinia carotovora subsp. atroseptica and characterization of virulence factors.</title>
        <authorList>
            <person name="Bell K.S."/>
            <person name="Sebaihia M."/>
            <person name="Pritchard L."/>
            <person name="Holden M.T.G."/>
            <person name="Hyman L.J."/>
            <person name="Holeva M.C."/>
            <person name="Thomson N.R."/>
            <person name="Bentley S.D."/>
            <person name="Churcher L.J.C."/>
            <person name="Mungall K."/>
            <person name="Atkin R."/>
            <person name="Bason N."/>
            <person name="Brooks K."/>
            <person name="Chillingworth T."/>
            <person name="Clark K."/>
            <person name="Doggett J."/>
            <person name="Fraser A."/>
            <person name="Hance Z."/>
            <person name="Hauser H."/>
            <person name="Jagels K."/>
            <person name="Moule S."/>
            <person name="Norbertczak H."/>
            <person name="Ormond D."/>
            <person name="Price C."/>
            <person name="Quail M.A."/>
            <person name="Sanders M."/>
            <person name="Walker D."/>
            <person name="Whitehead S."/>
            <person name="Salmond G.P.C."/>
            <person name="Birch P.R.J."/>
            <person name="Parkhill J."/>
            <person name="Toth I.K."/>
        </authorList>
    </citation>
    <scope>NUCLEOTIDE SEQUENCE [LARGE SCALE GENOMIC DNA]</scope>
    <source>
        <strain>SCRI 1043 / ATCC BAA-672</strain>
    </source>
</reference>
<reference key="2">
    <citation type="journal article" date="2018" name="Nat. Chem. Biol.">
        <title>Functional assignment of multiple catabolic pathways for D-apiose.</title>
        <authorList>
            <person name="Carter M.S."/>
            <person name="Zhang X."/>
            <person name="Huang H."/>
            <person name="Bouvier J.T."/>
            <person name="Francisco B.S."/>
            <person name="Vetting M.W."/>
            <person name="Al-Obaidi N."/>
            <person name="Bonanno J.B."/>
            <person name="Ghosh A."/>
            <person name="Zallot R.G."/>
            <person name="Andersen H.M."/>
            <person name="Almo S.C."/>
            <person name="Gerlt J.A."/>
        </authorList>
    </citation>
    <scope>FUNCTION</scope>
    <scope>CATALYTIC ACTIVITY</scope>
    <scope>BIOPHYSICOCHEMICAL PROPERTIES</scope>
    <scope>PATHWAY</scope>
</reference>
<name>APNO_PECAS</name>
<comment type="function">
    <text evidence="2">Involved in catabolism of D-apiose. Catalyzes the conversion of D-apionate to 3-oxo-isoapionate.</text>
</comment>
<comment type="catalytic activity">
    <reaction evidence="2">
        <text>D-apionate + NAD(+) = 3-oxoisoapionate + NADH + H(+)</text>
        <dbReference type="Rhea" id="RHEA:57044"/>
        <dbReference type="ChEBI" id="CHEBI:15378"/>
        <dbReference type="ChEBI" id="CHEBI:57540"/>
        <dbReference type="ChEBI" id="CHEBI:57945"/>
        <dbReference type="ChEBI" id="CHEBI:141352"/>
        <dbReference type="ChEBI" id="CHEBI:141353"/>
        <dbReference type="EC" id="1.1.1.421"/>
    </reaction>
</comment>
<comment type="cofactor">
    <cofactor evidence="1">
        <name>Zn(2+)</name>
        <dbReference type="ChEBI" id="CHEBI:29105"/>
    </cofactor>
</comment>
<comment type="biophysicochemical properties">
    <kinetics>
        <KM evidence="2">0.13 mM for D-apiose</KM>
        <text evidence="2">kcat is 0.47 sec(-1).</text>
    </kinetics>
</comment>
<comment type="pathway">
    <text evidence="2">Carbohydrate metabolism.</text>
</comment>
<comment type="similarity">
    <text evidence="4">Belongs to the ApnO family.</text>
</comment>
<protein>
    <recommendedName>
        <fullName evidence="3">D-apionate oxidoisomerase</fullName>
        <ecNumber evidence="2">1.1.1.421</ecNumber>
    </recommendedName>
</protein>
<keyword id="KW-0119">Carbohydrate metabolism</keyword>
<keyword id="KW-0479">Metal-binding</keyword>
<keyword id="KW-0520">NAD</keyword>
<keyword id="KW-0547">Nucleotide-binding</keyword>
<keyword id="KW-0560">Oxidoreductase</keyword>
<keyword id="KW-1185">Reference proteome</keyword>
<keyword id="KW-0862">Zinc</keyword>
<evidence type="ECO:0000250" key="1">
    <source>
        <dbReference type="UniProtKB" id="F8GV06"/>
    </source>
</evidence>
<evidence type="ECO:0000269" key="2">
    <source>
    </source>
</evidence>
<evidence type="ECO:0000303" key="3">
    <source>
    </source>
</evidence>
<evidence type="ECO:0000305" key="4"/>
<evidence type="ECO:0000312" key="5">
    <source>
        <dbReference type="EMBL" id="CAG73781.1"/>
    </source>
</evidence>
<gene>
    <name evidence="3" type="primary">apnO</name>
    <name evidence="5" type="ordered locus">ECA0869</name>
</gene>
<proteinExistence type="evidence at protein level"/>